<sequence length="1057" mass="110852">MSSQQFPRSGAPPPGLGANPPTGPASGTAGLIAPAATTSDESVRDPEVAPRDQHLGPGGPAPPREEKQEPVVVRPYPQVQMLAPHHPVPPGAPVTVAAPPAHLAPAVPLSFSDGLMKPPLKPTMPSRPIAPAPPSTLSAPTKVPGQVTVTMESSIPQAPTIPVATISGQQGHPSNLHHIMATNVQMSIIRSSAPGPPLHIGASHLPRGAAAAAVMSSSKVTTVLRPASQLPNAATAQPAVQHIIHQPIQSRPPVTTSSTIPPAVVATVSATRAQSPVITTTAAHATESTLSRPTLSIQQHPPSAAISIQRPAQPRDAATRITLPSHPAIGAQKQQLHTMAQKTIFSTGTPVAAATVAPILATNTIASATTAGSVSHTQAPTSTIVTMTMPSHSSHATAVTTSNIPVAKVVPQQITHTSPRIQSDYTAERSNLIPLSSHRASPNPVAMETRNDNRQSVPVQFQYFLPTYPPSAYPLTAHTYTPITSSVSTIRQYPVSAQAPNSAITAQTGVGVASTVHLNPMQLMTVDASHARHIQGIQPAPISAQGIQPAPIGAQGIQPAPIGTQGLHPAAPIGTQGLQPAPISAQQPQADTKTSVVLADGATIVANPISNTFNTASAATTVVQTHSQSASAPAQGSSPRPSILRKKPTTDGLAVRKSLIPPQPPEVASTRVENTMRSTSGSPRPAGAKPKPEIHVSMATPVTVSMEAVSNQGSEQPTIAVPPSSQQPPSAIPTIIAAASPTSQPAAALSTIPGAVPAAPPTSTTIVAAPAPPATMSGALSAVLGPVVPEIKIKEEAEPMDIMRPVSAVPPLTTSTVSPSLALLANNLSMPPSDLPPGASPRKKPRKQQHVISTEEGDMMETNSTDDEKSTAKSLLVKAEKRKSPPKEYIDEEGVRYVPVRPRPPITLLRHYRNPWKAAYHHFQRYSDVRVKEEKKAMLQEIANQKGVSCRAQGWKVHLCAAQLLQLTNLEHDVYERLTALQEGLIPKKKAATDDDLHRINELIQGNMQRCKLVMDQINEARDSMLKVLDHKDRVLKLLNKNGTVKKVSKLKRKEKV</sequence>
<feature type="chain" id="PRO_0000283738" description="Histone deacetylase complex subunit SAP130">
    <location>
        <begin position="1"/>
        <end position="1057"/>
    </location>
</feature>
<feature type="region of interest" description="Disordered" evidence="2">
    <location>
        <begin position="1"/>
        <end position="68"/>
    </location>
</feature>
<feature type="region of interest" description="Disordered" evidence="2">
    <location>
        <begin position="289"/>
        <end position="314"/>
    </location>
</feature>
<feature type="region of interest" description="Disordered" evidence="2">
    <location>
        <begin position="556"/>
        <end position="594"/>
    </location>
</feature>
<feature type="region of interest" description="Disordered" evidence="2">
    <location>
        <begin position="624"/>
        <end position="692"/>
    </location>
</feature>
<feature type="region of interest" description="Disordered" evidence="2">
    <location>
        <begin position="827"/>
        <end position="880"/>
    </location>
</feature>
<feature type="compositionally biased region" description="Basic and acidic residues" evidence="2">
    <location>
        <begin position="41"/>
        <end position="54"/>
    </location>
</feature>
<feature type="compositionally biased region" description="Polar residues" evidence="2">
    <location>
        <begin position="289"/>
        <end position="301"/>
    </location>
</feature>
<feature type="compositionally biased region" description="Low complexity" evidence="2">
    <location>
        <begin position="579"/>
        <end position="590"/>
    </location>
</feature>
<feature type="compositionally biased region" description="Low complexity" evidence="2">
    <location>
        <begin position="624"/>
        <end position="642"/>
    </location>
</feature>
<feature type="compositionally biased region" description="Polar residues" evidence="2">
    <location>
        <begin position="671"/>
        <end position="682"/>
    </location>
</feature>
<keyword id="KW-0539">Nucleus</keyword>
<keyword id="KW-1185">Reference proteome</keyword>
<keyword id="KW-0678">Repressor</keyword>
<keyword id="KW-0804">Transcription</keyword>
<keyword id="KW-0805">Transcription regulation</keyword>
<comment type="function">
    <text evidence="1">Acts as a transcriptional repressor. May function in the assembly and/or enzymatic activity of the mSin3A corepressor complex or in mediating interactions between the complex and other regulatory complexes (By similarity).</text>
</comment>
<comment type="subunit">
    <text evidence="1">Component of a mSin3A corepressor complex that contains SIN3A, SAP130, SUDS3/SAP45, ARID4B/SAP180, HDAC1 and HDAC2.</text>
</comment>
<comment type="subcellular location">
    <subcellularLocation>
        <location evidence="1">Nucleus</location>
    </subcellularLocation>
</comment>
<comment type="domain">
    <text evidence="1">The N-terminus may interact with a transcriptional coactivator.</text>
</comment>
<comment type="domain">
    <text evidence="1">The C-terminus may interact with HDAC-dependent and HDAC-independent corepressors.</text>
</comment>
<comment type="similarity">
    <text evidence="3">Belongs to the SAP130 family.</text>
</comment>
<accession>Q5F3U0</accession>
<reference key="1">
    <citation type="journal article" date="2005" name="Genome Biol.">
        <title>Full-length cDNAs from chicken bursal lymphocytes to facilitate gene function analysis.</title>
        <authorList>
            <person name="Caldwell R.B."/>
            <person name="Kierzek A.M."/>
            <person name="Arakawa H."/>
            <person name="Bezzubov Y."/>
            <person name="Zaim J."/>
            <person name="Fiedler P."/>
            <person name="Kutter S."/>
            <person name="Blagodatski A."/>
            <person name="Kostovska D."/>
            <person name="Koter M."/>
            <person name="Plachy J."/>
            <person name="Carninci P."/>
            <person name="Hayashizaki Y."/>
            <person name="Buerstedde J.-M."/>
        </authorList>
    </citation>
    <scope>NUCLEOTIDE SEQUENCE [LARGE SCALE MRNA]</scope>
    <source>
        <strain>CB</strain>
        <tissue>Bursa of Fabricius</tissue>
    </source>
</reference>
<protein>
    <recommendedName>
        <fullName>Histone deacetylase complex subunit SAP130</fullName>
    </recommendedName>
    <alternativeName>
        <fullName>130 kDa Sin3-associated polypeptide</fullName>
    </alternativeName>
    <alternativeName>
        <fullName>Sin3-associated polypeptide p130</fullName>
    </alternativeName>
</protein>
<name>SP130_CHICK</name>
<organism>
    <name type="scientific">Gallus gallus</name>
    <name type="common">Chicken</name>
    <dbReference type="NCBI Taxonomy" id="9031"/>
    <lineage>
        <taxon>Eukaryota</taxon>
        <taxon>Metazoa</taxon>
        <taxon>Chordata</taxon>
        <taxon>Craniata</taxon>
        <taxon>Vertebrata</taxon>
        <taxon>Euteleostomi</taxon>
        <taxon>Archelosauria</taxon>
        <taxon>Archosauria</taxon>
        <taxon>Dinosauria</taxon>
        <taxon>Saurischia</taxon>
        <taxon>Theropoda</taxon>
        <taxon>Coelurosauria</taxon>
        <taxon>Aves</taxon>
        <taxon>Neognathae</taxon>
        <taxon>Galloanserae</taxon>
        <taxon>Galliformes</taxon>
        <taxon>Phasianidae</taxon>
        <taxon>Phasianinae</taxon>
        <taxon>Gallus</taxon>
    </lineage>
</organism>
<gene>
    <name type="primary">SAP130</name>
    <name type="ORF">RCJMB04_7d5</name>
</gene>
<dbReference type="EMBL" id="AJ851560">
    <property type="protein sequence ID" value="CAH65194.1"/>
    <property type="molecule type" value="mRNA"/>
</dbReference>
<dbReference type="RefSeq" id="NP_001026472.1">
    <property type="nucleotide sequence ID" value="NM_001031301.1"/>
</dbReference>
<dbReference type="SMR" id="Q5F3U0"/>
<dbReference type="FunCoup" id="Q5F3U0">
    <property type="interactions" value="2070"/>
</dbReference>
<dbReference type="STRING" id="9031.ENSGALP00000003216"/>
<dbReference type="PaxDb" id="9031-ENSGALP00000003216"/>
<dbReference type="GeneID" id="424756"/>
<dbReference type="KEGG" id="gga:424756"/>
<dbReference type="CTD" id="79595"/>
<dbReference type="VEuPathDB" id="HostDB:geneid_424756"/>
<dbReference type="eggNOG" id="ENOG502QQ6P">
    <property type="taxonomic scope" value="Eukaryota"/>
</dbReference>
<dbReference type="InParanoid" id="Q5F3U0"/>
<dbReference type="OrthoDB" id="10048604at2759"/>
<dbReference type="PhylomeDB" id="Q5F3U0"/>
<dbReference type="PRO" id="PR:Q5F3U0"/>
<dbReference type="Proteomes" id="UP000000539">
    <property type="component" value="Unassembled WGS sequence"/>
</dbReference>
<dbReference type="GO" id="GO:0070822">
    <property type="term" value="C:Sin3-type complex"/>
    <property type="evidence" value="ECO:0000318"/>
    <property type="project" value="GO_Central"/>
</dbReference>
<dbReference type="GO" id="GO:0000122">
    <property type="term" value="P:negative regulation of transcription by RNA polymerase II"/>
    <property type="evidence" value="ECO:0000318"/>
    <property type="project" value="GO_Central"/>
</dbReference>
<dbReference type="InterPro" id="IPR024137">
    <property type="entry name" value="His_deAcase_cplx_SAP130"/>
</dbReference>
<dbReference type="InterPro" id="IPR031963">
    <property type="entry name" value="SAP130_C"/>
</dbReference>
<dbReference type="PANTHER" id="PTHR13497">
    <property type="entry name" value="HISTONE DEACETYLASE COMPLEX SUBUNIT SAP130"/>
    <property type="match status" value="1"/>
</dbReference>
<dbReference type="PANTHER" id="PTHR13497:SF3">
    <property type="entry name" value="HISTONE DEACETYLASE COMPLEX SUBUNIT SAP130"/>
    <property type="match status" value="1"/>
</dbReference>
<dbReference type="Pfam" id="PF16014">
    <property type="entry name" value="SAP130_C"/>
    <property type="match status" value="1"/>
</dbReference>
<proteinExistence type="evidence at transcript level"/>
<evidence type="ECO:0000250" key="1"/>
<evidence type="ECO:0000256" key="2">
    <source>
        <dbReference type="SAM" id="MobiDB-lite"/>
    </source>
</evidence>
<evidence type="ECO:0000305" key="3"/>